<sequence length="116" mass="12837">MFRSFMLAFQKACRQVHKQYLNKYYSVITYFLAFLTKFAILLESFTPFVSTPPLTSTPITPFNLSASPTFSGVSPPANIKCKLSGLSCLPTQSEIEFQSKSSPVPPASESNKGINE</sequence>
<reference key="1">
    <citation type="journal article" date="1997" name="Nature">
        <title>The nucleotide sequence of Saccharomyces cerevisiae chromosome IV.</title>
        <authorList>
            <person name="Jacq C."/>
            <person name="Alt-Moerbe J."/>
            <person name="Andre B."/>
            <person name="Arnold W."/>
            <person name="Bahr A."/>
            <person name="Ballesta J.P.G."/>
            <person name="Bargues M."/>
            <person name="Baron L."/>
            <person name="Becker A."/>
            <person name="Biteau N."/>
            <person name="Bloecker H."/>
            <person name="Blugeon C."/>
            <person name="Boskovic J."/>
            <person name="Brandt P."/>
            <person name="Brueckner M."/>
            <person name="Buitrago M.J."/>
            <person name="Coster F."/>
            <person name="Delaveau T."/>
            <person name="del Rey F."/>
            <person name="Dujon B."/>
            <person name="Eide L.G."/>
            <person name="Garcia-Cantalejo J.M."/>
            <person name="Goffeau A."/>
            <person name="Gomez-Peris A."/>
            <person name="Granotier C."/>
            <person name="Hanemann V."/>
            <person name="Hankeln T."/>
            <person name="Hoheisel J.D."/>
            <person name="Jaeger W."/>
            <person name="Jimenez A."/>
            <person name="Jonniaux J.-L."/>
            <person name="Kraemer C."/>
            <person name="Kuester H."/>
            <person name="Laamanen P."/>
            <person name="Legros Y."/>
            <person name="Louis E.J."/>
            <person name="Moeller-Rieker S."/>
            <person name="Monnet A."/>
            <person name="Moro M."/>
            <person name="Mueller-Auer S."/>
            <person name="Nussbaumer B."/>
            <person name="Paricio N."/>
            <person name="Paulin L."/>
            <person name="Perea J."/>
            <person name="Perez-Alonso M."/>
            <person name="Perez-Ortin J.E."/>
            <person name="Pohl T.M."/>
            <person name="Prydz H."/>
            <person name="Purnelle B."/>
            <person name="Rasmussen S.W."/>
            <person name="Remacha M.A."/>
            <person name="Revuelta J.L."/>
            <person name="Rieger M."/>
            <person name="Salom D."/>
            <person name="Saluz H.P."/>
            <person name="Saiz J.E."/>
            <person name="Saren A.-M."/>
            <person name="Schaefer M."/>
            <person name="Scharfe M."/>
            <person name="Schmidt E.R."/>
            <person name="Schneider C."/>
            <person name="Scholler P."/>
            <person name="Schwarz S."/>
            <person name="Soler-Mira A."/>
            <person name="Urrestarazu L.A."/>
            <person name="Verhasselt P."/>
            <person name="Vissers S."/>
            <person name="Voet M."/>
            <person name="Volckaert G."/>
            <person name="Wagner G."/>
            <person name="Wambutt R."/>
            <person name="Wedler E."/>
            <person name="Wedler H."/>
            <person name="Woelfl S."/>
            <person name="Harris D.E."/>
            <person name="Bowman S."/>
            <person name="Brown D."/>
            <person name="Churcher C.M."/>
            <person name="Connor R."/>
            <person name="Dedman K."/>
            <person name="Gentles S."/>
            <person name="Hamlin N."/>
            <person name="Hunt S."/>
            <person name="Jones L."/>
            <person name="McDonald S."/>
            <person name="Murphy L.D."/>
            <person name="Niblett D."/>
            <person name="Odell C."/>
            <person name="Oliver K."/>
            <person name="Rajandream M.A."/>
            <person name="Richards C."/>
            <person name="Shore L."/>
            <person name="Walsh S.V."/>
            <person name="Barrell B.G."/>
            <person name="Dietrich F.S."/>
            <person name="Mulligan J.T."/>
            <person name="Allen E."/>
            <person name="Araujo R."/>
            <person name="Aviles E."/>
            <person name="Berno A."/>
            <person name="Carpenter J."/>
            <person name="Chen E."/>
            <person name="Cherry J.M."/>
            <person name="Chung E."/>
            <person name="Duncan M."/>
            <person name="Hunicke-Smith S."/>
            <person name="Hyman R.W."/>
            <person name="Komp C."/>
            <person name="Lashkari D."/>
            <person name="Lew H."/>
            <person name="Lin D."/>
            <person name="Mosedale D."/>
            <person name="Nakahara K."/>
            <person name="Namath A."/>
            <person name="Oefner P."/>
            <person name="Oh C."/>
            <person name="Petel F.X."/>
            <person name="Roberts D."/>
            <person name="Schramm S."/>
            <person name="Schroeder M."/>
            <person name="Shogren T."/>
            <person name="Shroff N."/>
            <person name="Winant A."/>
            <person name="Yelton M.A."/>
            <person name="Botstein D."/>
            <person name="Davis R.W."/>
            <person name="Johnston M."/>
            <person name="Andrews S."/>
            <person name="Brinkman R."/>
            <person name="Cooper J."/>
            <person name="Ding H."/>
            <person name="Du Z."/>
            <person name="Favello A."/>
            <person name="Fulton L."/>
            <person name="Gattung S."/>
            <person name="Greco T."/>
            <person name="Hallsworth K."/>
            <person name="Hawkins J."/>
            <person name="Hillier L.W."/>
            <person name="Jier M."/>
            <person name="Johnson D."/>
            <person name="Johnston L."/>
            <person name="Kirsten J."/>
            <person name="Kucaba T."/>
            <person name="Langston Y."/>
            <person name="Latreille P."/>
            <person name="Le T."/>
            <person name="Mardis E."/>
            <person name="Menezes S."/>
            <person name="Miller N."/>
            <person name="Nhan M."/>
            <person name="Pauley A."/>
            <person name="Peluso D."/>
            <person name="Rifkin L."/>
            <person name="Riles L."/>
            <person name="Taich A."/>
            <person name="Trevaskis E."/>
            <person name="Vignati D."/>
            <person name="Wilcox L."/>
            <person name="Wohldman P."/>
            <person name="Vaudin M."/>
            <person name="Wilson R."/>
            <person name="Waterston R."/>
            <person name="Albermann K."/>
            <person name="Hani J."/>
            <person name="Heumann K."/>
            <person name="Kleine K."/>
            <person name="Mewes H.-W."/>
            <person name="Zollner A."/>
            <person name="Zaccaria P."/>
        </authorList>
    </citation>
    <scope>NUCLEOTIDE SEQUENCE [LARGE SCALE GENOMIC DNA]</scope>
    <source>
        <strain>ATCC 204508 / S288c</strain>
    </source>
</reference>
<reference key="2">
    <citation type="journal article" date="2014" name="G3 (Bethesda)">
        <title>The reference genome sequence of Saccharomyces cerevisiae: Then and now.</title>
        <authorList>
            <person name="Engel S.R."/>
            <person name="Dietrich F.S."/>
            <person name="Fisk D.G."/>
            <person name="Binkley G."/>
            <person name="Balakrishnan R."/>
            <person name="Costanzo M.C."/>
            <person name="Dwight S.S."/>
            <person name="Hitz B.C."/>
            <person name="Karra K."/>
            <person name="Nash R.S."/>
            <person name="Weng S."/>
            <person name="Wong E.D."/>
            <person name="Lloyd P."/>
            <person name="Skrzypek M.S."/>
            <person name="Miyasato S.R."/>
            <person name="Simison M."/>
            <person name="Cherry J.M."/>
        </authorList>
    </citation>
    <scope>GENOME REANNOTATION</scope>
    <source>
        <strain>ATCC 204508 / S288c</strain>
    </source>
</reference>
<comment type="subcellular location">
    <subcellularLocation>
        <location evidence="1">Membrane</location>
        <topology evidence="1">Single-pass membrane protein</topology>
    </subcellularLocation>
</comment>
<comment type="miscellaneous">
    <text evidence="3">Partially overlaps TRP1.</text>
</comment>
<comment type="caution">
    <text evidence="4">Product of a dubious gene prediction unlikely to encode a functional protein. Because of that it is not part of the S.cerevisiae S288c complete/reference proteome set.</text>
</comment>
<proteinExistence type="uncertain"/>
<dbReference type="EMBL" id="KJ412213">
    <property type="protein sequence ID" value="AHX39256.1"/>
    <property type="molecule type" value="Genomic_DNA"/>
</dbReference>
<dbReference type="PIR" id="S70313">
    <property type="entry name" value="S70313"/>
</dbReference>
<dbReference type="SMR" id="A0A023PZ99"/>
<dbReference type="STRING" id="4932.YDR008C"/>
<dbReference type="PaxDb" id="4932-YDR008C"/>
<dbReference type="EnsemblFungi" id="YDR008C_mRNA">
    <property type="protein sequence ID" value="YDR008C"/>
    <property type="gene ID" value="YDR008C"/>
</dbReference>
<dbReference type="AGR" id="SGD:S000002415"/>
<dbReference type="SGD" id="S000002415">
    <property type="gene designation" value="YDR008C"/>
</dbReference>
<dbReference type="HOGENOM" id="CLU_2098744_0_0_1"/>
<dbReference type="GO" id="GO:0016020">
    <property type="term" value="C:membrane"/>
    <property type="evidence" value="ECO:0007669"/>
    <property type="project" value="UniProtKB-SubCell"/>
</dbReference>
<accession>A0A023PZ99</accession>
<organism>
    <name type="scientific">Saccharomyces cerevisiae (strain ATCC 204508 / S288c)</name>
    <name type="common">Baker's yeast</name>
    <dbReference type="NCBI Taxonomy" id="559292"/>
    <lineage>
        <taxon>Eukaryota</taxon>
        <taxon>Fungi</taxon>
        <taxon>Dikarya</taxon>
        <taxon>Ascomycota</taxon>
        <taxon>Saccharomycotina</taxon>
        <taxon>Saccharomycetes</taxon>
        <taxon>Saccharomycetales</taxon>
        <taxon>Saccharomycetaceae</taxon>
        <taxon>Saccharomyces</taxon>
    </lineage>
</organism>
<keyword id="KW-0472">Membrane</keyword>
<keyword id="KW-0812">Transmembrane</keyword>
<keyword id="KW-1133">Transmembrane helix</keyword>
<feature type="chain" id="PRO_0000430979" description="Putative uncharacterized protein YDR008C">
    <location>
        <begin position="1"/>
        <end position="116"/>
    </location>
</feature>
<feature type="transmembrane region" description="Helical" evidence="1">
    <location>
        <begin position="20"/>
        <end position="42"/>
    </location>
</feature>
<feature type="region of interest" description="Disordered" evidence="2">
    <location>
        <begin position="95"/>
        <end position="116"/>
    </location>
</feature>
<evidence type="ECO:0000255" key="1"/>
<evidence type="ECO:0000256" key="2">
    <source>
        <dbReference type="SAM" id="MobiDB-lite"/>
    </source>
</evidence>
<evidence type="ECO:0000305" key="3"/>
<evidence type="ECO:0000305" key="4">
    <source>
    </source>
</evidence>
<evidence type="ECO:0000312" key="5">
    <source>
        <dbReference type="SGD" id="S000002415"/>
    </source>
</evidence>
<protein>
    <recommendedName>
        <fullName evidence="3">Putative uncharacterized protein YDR008C</fullName>
    </recommendedName>
</protein>
<gene>
    <name evidence="5" type="ordered locus">YDR008C</name>
</gene>
<name>YD008_YEAST</name>